<organism evidence="13">
    <name type="scientific">Rattus norvegicus</name>
    <name type="common">Rat</name>
    <dbReference type="NCBI Taxonomy" id="10116"/>
    <lineage>
        <taxon>Eukaryota</taxon>
        <taxon>Metazoa</taxon>
        <taxon>Chordata</taxon>
        <taxon>Craniata</taxon>
        <taxon>Vertebrata</taxon>
        <taxon>Euteleostomi</taxon>
        <taxon>Mammalia</taxon>
        <taxon>Eutheria</taxon>
        <taxon>Euarchontoglires</taxon>
        <taxon>Glires</taxon>
        <taxon>Rodentia</taxon>
        <taxon>Myomorpha</taxon>
        <taxon>Muroidea</taxon>
        <taxon>Muridae</taxon>
        <taxon>Murinae</taxon>
        <taxon>Rattus</taxon>
    </lineage>
</organism>
<comment type="function">
    <text evidence="4 10">Phosphorylates phosphatidylinositol (PI) in the first committed step in the production of the second messenger inositol-1,4,5,-trisphosphate (PIP) (PubMed:8973579). May regulate Golgi disintegration/reorganization during mitosis, possibly via its phosphorylation (By similarity). Involved in Golgi-to-plasma membrane trafficking (PubMed:8973579). May play an important role in the inner ear development.</text>
</comment>
<comment type="catalytic activity">
    <reaction evidence="10">
        <text>a 1,2-diacyl-sn-glycero-3-phospho-(1D-myo-inositol) + ATP = a 1,2-diacyl-sn-glycero-3-phospho-(1D-myo-inositol 4-phosphate) + ADP + H(+)</text>
        <dbReference type="Rhea" id="RHEA:19877"/>
        <dbReference type="ChEBI" id="CHEBI:15378"/>
        <dbReference type="ChEBI" id="CHEBI:30616"/>
        <dbReference type="ChEBI" id="CHEBI:57880"/>
        <dbReference type="ChEBI" id="CHEBI:58178"/>
        <dbReference type="ChEBI" id="CHEBI:456216"/>
        <dbReference type="EC" id="2.7.1.67"/>
    </reaction>
    <physiologicalReaction direction="left-to-right" evidence="12">
        <dbReference type="Rhea" id="RHEA:19878"/>
    </physiologicalReaction>
</comment>
<comment type="cofactor">
    <cofactor evidence="4">
        <name>Mg(2+)</name>
        <dbReference type="ChEBI" id="CHEBI:18420"/>
    </cofactor>
    <cofactor evidence="4">
        <name>Mn(2+)</name>
        <dbReference type="ChEBI" id="CHEBI:29035"/>
    </cofactor>
</comment>
<comment type="activity regulation">
    <text evidence="2 10">Inhibited by wortmannin (PubMed:8973579). Increased kinase activity upon interaction with NCS1/FREQ (By similarity).</text>
</comment>
<comment type="subunit">
    <text evidence="4 9">Interacts with ARF1 and ARF3 in the Golgi complex, but not with ARF4, ARF5 or ARF6 (By similarity). Interacts with NCS1/FREQ in a calcium-independent manner. Interacts with CALN1/CABP8 and CALN2/CABP7; in a calcium-dependent manner; this interaction competes with NCS1/FREQ binding (PubMed:19458041). Interacts with ACBD3. Interacts with ARMH3, YWHAB, YWHAE, YWHAG, YWHAH, YWHAQ, YWHAZ and SFN (By similarity). Interacts with GGA2 (via VHS domain); the interaction is important for PI4KB location at the Golgi apparatus membrane (By similarity). Interacts with ATG9A.</text>
</comment>
<comment type="subcellular location">
    <subcellularLocation>
        <location evidence="8 9 10">Golgi apparatus</location>
    </subcellularLocation>
    <subcellularLocation>
        <location evidence="1">Endomembrane system</location>
    </subcellularLocation>
    <subcellularLocation>
        <location evidence="1">Mitochondrion outer membrane</location>
        <topology evidence="1">Peripheral membrane protein</topology>
    </subcellularLocation>
    <subcellularLocation>
        <location evidence="1">Rough endoplasmic reticulum membrane</location>
        <topology evidence="1">Peripheral membrane protein</topology>
    </subcellularLocation>
    <subcellularLocation>
        <location evidence="4">Golgi apparatus membrane</location>
    </subcellularLocation>
    <text evidence="4">Found in the outer membrane of mitochondria and membranes of the rough endoplasmic reticulum. Recruited to the Golgi complex by the small GTPase ARF to stimulate the synthesis of phosphatidylinositol 4,5-bisphosphate (PIP2) on the Golgi complex. Recruited to the Golgi apparatus membrane by ACBD3, GGA2 is also involved in the recruitment.</text>
</comment>
<comment type="tissue specificity">
    <text evidence="10">Strongly expressed in brain, kidney, lung, small intestine, uterus and adrenal gland. Weaker expression in liver, heart, skeletal muscle, thymus and testis. Not detected in spleen.</text>
</comment>
<comment type="similarity">
    <text evidence="11">Belongs to the PI3/PI4-kinase family. Type III PI4K subfamily.</text>
</comment>
<evidence type="ECO:0000250" key="1"/>
<evidence type="ECO:0000250" key="2">
    <source>
        <dbReference type="UniProtKB" id="O02810"/>
    </source>
</evidence>
<evidence type="ECO:0000250" key="3">
    <source>
        <dbReference type="UniProtKB" id="Q8BKC8"/>
    </source>
</evidence>
<evidence type="ECO:0000250" key="4">
    <source>
        <dbReference type="UniProtKB" id="Q9UBF8"/>
    </source>
</evidence>
<evidence type="ECO:0000255" key="5">
    <source>
        <dbReference type="PROSITE-ProRule" id="PRU00269"/>
    </source>
</evidence>
<evidence type="ECO:0000255" key="6">
    <source>
        <dbReference type="PROSITE-ProRule" id="PRU00878"/>
    </source>
</evidence>
<evidence type="ECO:0000256" key="7">
    <source>
        <dbReference type="SAM" id="MobiDB-lite"/>
    </source>
</evidence>
<evidence type="ECO:0000269" key="8">
    <source>
    </source>
</evidence>
<evidence type="ECO:0000269" key="9">
    <source>
    </source>
</evidence>
<evidence type="ECO:0000269" key="10">
    <source>
    </source>
</evidence>
<evidence type="ECO:0000305" key="11"/>
<evidence type="ECO:0000305" key="12">
    <source>
    </source>
</evidence>
<evidence type="ECO:0000312" key="13">
    <source>
        <dbReference type="EMBL" id="BAA18969.1"/>
    </source>
</evidence>
<evidence type="ECO:0007744" key="14">
    <source>
    </source>
</evidence>
<keyword id="KW-0007">Acetylation</keyword>
<keyword id="KW-0067">ATP-binding</keyword>
<keyword id="KW-0256">Endoplasmic reticulum</keyword>
<keyword id="KW-0333">Golgi apparatus</keyword>
<keyword id="KW-0418">Kinase</keyword>
<keyword id="KW-0443">Lipid metabolism</keyword>
<keyword id="KW-0472">Membrane</keyword>
<keyword id="KW-0496">Mitochondrion</keyword>
<keyword id="KW-1000">Mitochondrion outer membrane</keyword>
<keyword id="KW-0547">Nucleotide-binding</keyword>
<keyword id="KW-0597">Phosphoprotein</keyword>
<keyword id="KW-1185">Reference proteome</keyword>
<keyword id="KW-0808">Transferase</keyword>
<gene>
    <name type="primary">Pi4kb</name>
    <name type="synonym">Pik4cb</name>
</gene>
<proteinExistence type="evidence at protein level"/>
<feature type="initiator methionine" description="Removed" evidence="4">
    <location>
        <position position="1"/>
    </location>
</feature>
<feature type="chain" id="PRO_0000088831" description="Phosphatidylinositol 4-kinase beta">
    <location>
        <begin position="2"/>
        <end position="816"/>
    </location>
</feature>
<feature type="domain" description="PIK helical" evidence="6">
    <location>
        <begin position="61"/>
        <end position="242"/>
    </location>
</feature>
<feature type="domain" description="PI3K/PI4K catalytic" evidence="5">
    <location>
        <begin position="535"/>
        <end position="801"/>
    </location>
</feature>
<feature type="region of interest" description="Disordered" evidence="7">
    <location>
        <begin position="1"/>
        <end position="29"/>
    </location>
</feature>
<feature type="region of interest" description="Interaction with ACBD3" evidence="4">
    <location>
        <begin position="2"/>
        <end position="68"/>
    </location>
</feature>
<feature type="region of interest" description="Disordered" evidence="7">
    <location>
        <begin position="99"/>
        <end position="121"/>
    </location>
</feature>
<feature type="region of interest" description="Disordered" evidence="7">
    <location>
        <begin position="250"/>
        <end position="318"/>
    </location>
</feature>
<feature type="region of interest" description="G-loop" evidence="5">
    <location>
        <begin position="541"/>
        <end position="547"/>
    </location>
</feature>
<feature type="region of interest" description="Catalytic loop" evidence="5">
    <location>
        <begin position="668"/>
        <end position="676"/>
    </location>
</feature>
<feature type="region of interest" description="Activation loop" evidence="5">
    <location>
        <begin position="687"/>
        <end position="711"/>
    </location>
</feature>
<feature type="compositionally biased region" description="Low complexity" evidence="7">
    <location>
        <begin position="10"/>
        <end position="29"/>
    </location>
</feature>
<feature type="compositionally biased region" description="Polar residues" evidence="7">
    <location>
        <begin position="278"/>
        <end position="297"/>
    </location>
</feature>
<feature type="compositionally biased region" description="Polar residues" evidence="7">
    <location>
        <begin position="306"/>
        <end position="318"/>
    </location>
</feature>
<feature type="modified residue" description="N-acetylglycine" evidence="4">
    <location>
        <position position="2"/>
    </location>
</feature>
<feature type="modified residue" description="Phosphoserine" evidence="4">
    <location>
        <position position="258"/>
    </location>
</feature>
<feature type="modified residue" description="Phosphothreonine" evidence="4">
    <location>
        <position position="263"/>
    </location>
</feature>
<feature type="modified residue" description="Phosphoserine" evidence="4">
    <location>
        <position position="266"/>
    </location>
</feature>
<feature type="modified residue" description="Phosphoserine" evidence="3">
    <location>
        <position position="275"/>
    </location>
</feature>
<feature type="modified residue" description="Phosphoserine" evidence="4">
    <location>
        <position position="277"/>
    </location>
</feature>
<feature type="modified residue" description="Phosphoserine" evidence="3">
    <location>
        <position position="284"/>
    </location>
</feature>
<feature type="modified residue" description="Phosphoserine" evidence="4">
    <location>
        <position position="294"/>
    </location>
</feature>
<feature type="modified residue" description="Phosphoserine" evidence="14">
    <location>
        <position position="428"/>
    </location>
</feature>
<feature type="modified residue" description="Phosphothreonine" evidence="4">
    <location>
        <position position="438"/>
    </location>
</feature>
<feature type="modified residue" description="Phosphoserine" evidence="14">
    <location>
        <position position="511"/>
    </location>
</feature>
<feature type="modified residue" description="Phosphothreonine" evidence="4">
    <location>
        <position position="517"/>
    </location>
</feature>
<feature type="modified residue" description="Phosphothreonine" evidence="4">
    <location>
        <position position="519"/>
    </location>
</feature>
<reference evidence="11" key="1">
    <citation type="journal article" date="1996" name="Biochem. J.">
        <title>Cloning and characterization of a 92 kDa soluble phosphatidylinositol 4-kinase.</title>
        <authorList>
            <person name="Nakagawa T."/>
            <person name="Goto K."/>
            <person name="Kondo H."/>
        </authorList>
    </citation>
    <scope>NUCLEOTIDE SEQUENCE [MRNA]</scope>
    <scope>FUNCTION</scope>
    <scope>CATALYTIC ACTIVITY</scope>
    <scope>ACTIVITY REGULATION</scope>
    <scope>SUBCELLULAR LOCATION</scope>
    <scope>TISSUE SPECIFICITY</scope>
    <source>
        <strain evidence="10">Wistar Imamichi</strain>
        <tissue evidence="10">Brain</tissue>
    </source>
</reference>
<reference key="2">
    <citation type="journal article" date="2001" name="J. Biol. Chem.">
        <title>Interaction of neuronal calcium sensor-1 (NCS-1) with phosphatidylinositol 4-kinase beta stimulates lipid kinase activity and affects membrane trafficking in COS-7 cells.</title>
        <authorList>
            <person name="Zhao X."/>
            <person name="Varnai P."/>
            <person name="Tuymetova G."/>
            <person name="Balla A."/>
            <person name="Toth Z.E."/>
            <person name="Oker-Blom C."/>
            <person name="Roder J."/>
            <person name="Jeromin A."/>
            <person name="Balla T."/>
        </authorList>
    </citation>
    <scope>INTERACTION WITH NCS1</scope>
    <scope>SUBCELLULAR LOCATION</scope>
</reference>
<reference key="3">
    <citation type="journal article" date="2009" name="Proc. Natl. Acad. Sci. U.S.A.">
        <title>Calneurons provide a calcium threshold for trans-Golgi network to plasma membrane trafficking.</title>
        <authorList>
            <person name="Mikhaylova M."/>
            <person name="Reddy P.P."/>
            <person name="Munsch T."/>
            <person name="Landgraf P."/>
            <person name="Suman S.K."/>
            <person name="Smalla K.-H."/>
            <person name="Gundelfinger E.D."/>
            <person name="Sharma Y."/>
            <person name="Kreutz M.R."/>
        </authorList>
    </citation>
    <scope>SUBCELLULAR LOCATION</scope>
    <scope>INTERACTION WITH CALN1/CABP8 AND CALN2/CABP7</scope>
</reference>
<reference key="4">
    <citation type="journal article" date="2012" name="Nat. Commun.">
        <title>Quantitative maps of protein phosphorylation sites across 14 different rat organs and tissues.</title>
        <authorList>
            <person name="Lundby A."/>
            <person name="Secher A."/>
            <person name="Lage K."/>
            <person name="Nordsborg N.B."/>
            <person name="Dmytriyev A."/>
            <person name="Lundby C."/>
            <person name="Olsen J.V."/>
        </authorList>
    </citation>
    <scope>PHOSPHORYLATION [LARGE SCALE ANALYSIS] AT SER-428 AND SER-511</scope>
    <scope>IDENTIFICATION BY MASS SPECTROMETRY [LARGE SCALE ANALYSIS]</scope>
</reference>
<protein>
    <recommendedName>
        <fullName>Phosphatidylinositol 4-kinase beta</fullName>
        <shortName>PI4K-beta</shortName>
        <shortName>PI4Kbeta</shortName>
        <shortName>PtdIns 4-kinase beta</shortName>
        <ecNumber evidence="10">2.7.1.67</ecNumber>
    </recommendedName>
</protein>
<accession>O08561</accession>
<dbReference type="EC" id="2.7.1.67" evidence="10"/>
<dbReference type="EMBL" id="D84667">
    <property type="protein sequence ID" value="BAA18969.1"/>
    <property type="molecule type" value="mRNA"/>
</dbReference>
<dbReference type="RefSeq" id="NP_112345.1">
    <property type="nucleotide sequence ID" value="NM_031083.2"/>
</dbReference>
<dbReference type="SMR" id="O08561"/>
<dbReference type="FunCoup" id="O08561">
    <property type="interactions" value="3609"/>
</dbReference>
<dbReference type="IntAct" id="O08561">
    <property type="interactions" value="4"/>
</dbReference>
<dbReference type="MINT" id="O08561"/>
<dbReference type="STRING" id="10116.ENSRNOP00000070653"/>
<dbReference type="GlyGen" id="O08561">
    <property type="glycosylation" value="1 site"/>
</dbReference>
<dbReference type="iPTMnet" id="O08561"/>
<dbReference type="PhosphoSitePlus" id="O08561"/>
<dbReference type="jPOST" id="O08561"/>
<dbReference type="PaxDb" id="10116-ENSRNOP00000039342"/>
<dbReference type="GeneID" id="81747"/>
<dbReference type="KEGG" id="rno:81747"/>
<dbReference type="AGR" id="RGD:621214"/>
<dbReference type="CTD" id="5298"/>
<dbReference type="RGD" id="621214">
    <property type="gene designation" value="Pi4kb"/>
</dbReference>
<dbReference type="VEuPathDB" id="HostDB:ENSRNOG00000021024"/>
<dbReference type="eggNOG" id="KOG0903">
    <property type="taxonomic scope" value="Eukaryota"/>
</dbReference>
<dbReference type="HOGENOM" id="CLU_002446_6_0_1"/>
<dbReference type="InParanoid" id="O08561"/>
<dbReference type="PhylomeDB" id="O08561"/>
<dbReference type="TreeFam" id="TF102042"/>
<dbReference type="Reactome" id="R-RNO-1660514">
    <property type="pathway name" value="Synthesis of PIPs at the Golgi membrane"/>
</dbReference>
<dbReference type="PRO" id="PR:O08561"/>
<dbReference type="Proteomes" id="UP000002494">
    <property type="component" value="Chromosome 2"/>
</dbReference>
<dbReference type="Bgee" id="ENSRNOG00000021024">
    <property type="expression patterns" value="Expressed in skeletal muscle tissue and 19 other cell types or tissues"/>
</dbReference>
<dbReference type="ExpressionAtlas" id="O08561">
    <property type="expression patterns" value="baseline and differential"/>
</dbReference>
<dbReference type="GO" id="GO:0005737">
    <property type="term" value="C:cytoplasm"/>
    <property type="evidence" value="ECO:0000318"/>
    <property type="project" value="GO_Central"/>
</dbReference>
<dbReference type="GO" id="GO:0005794">
    <property type="term" value="C:Golgi apparatus"/>
    <property type="evidence" value="ECO:0000266"/>
    <property type="project" value="RGD"/>
</dbReference>
<dbReference type="GO" id="GO:0000139">
    <property type="term" value="C:Golgi membrane"/>
    <property type="evidence" value="ECO:0000266"/>
    <property type="project" value="RGD"/>
</dbReference>
<dbReference type="GO" id="GO:0016020">
    <property type="term" value="C:membrane"/>
    <property type="evidence" value="ECO:0000318"/>
    <property type="project" value="GO_Central"/>
</dbReference>
<dbReference type="GO" id="GO:0005741">
    <property type="term" value="C:mitochondrial outer membrane"/>
    <property type="evidence" value="ECO:0007669"/>
    <property type="project" value="UniProtKB-SubCell"/>
</dbReference>
<dbReference type="GO" id="GO:0030867">
    <property type="term" value="C:rough endoplasmic reticulum membrane"/>
    <property type="evidence" value="ECO:0007669"/>
    <property type="project" value="UniProtKB-SubCell"/>
</dbReference>
<dbReference type="GO" id="GO:0004430">
    <property type="term" value="F:1-phosphatidylinositol 4-kinase activity"/>
    <property type="evidence" value="ECO:0000314"/>
    <property type="project" value="RGD"/>
</dbReference>
<dbReference type="GO" id="GO:0071889">
    <property type="term" value="F:14-3-3 protein binding"/>
    <property type="evidence" value="ECO:0000250"/>
    <property type="project" value="UniProtKB"/>
</dbReference>
<dbReference type="GO" id="GO:0005524">
    <property type="term" value="F:ATP binding"/>
    <property type="evidence" value="ECO:0007669"/>
    <property type="project" value="UniProtKB-KW"/>
</dbReference>
<dbReference type="GO" id="GO:0048839">
    <property type="term" value="P:inner ear development"/>
    <property type="evidence" value="ECO:0000250"/>
    <property type="project" value="UniProtKB"/>
</dbReference>
<dbReference type="GO" id="GO:0007040">
    <property type="term" value="P:lysosome organization"/>
    <property type="evidence" value="ECO:0000266"/>
    <property type="project" value="RGD"/>
</dbReference>
<dbReference type="GO" id="GO:0046854">
    <property type="term" value="P:phosphatidylinositol phosphate biosynthetic process"/>
    <property type="evidence" value="ECO:0000318"/>
    <property type="project" value="GO_Central"/>
</dbReference>
<dbReference type="GO" id="GO:0048015">
    <property type="term" value="P:phosphatidylinositol-mediated signaling"/>
    <property type="evidence" value="ECO:0000318"/>
    <property type="project" value="GO_Central"/>
</dbReference>
<dbReference type="CDD" id="cd22246">
    <property type="entry name" value="PI4KB_NTD"/>
    <property type="match status" value="1"/>
</dbReference>
<dbReference type="CDD" id="cd05168">
    <property type="entry name" value="PI4Kc_III_beta"/>
    <property type="match status" value="1"/>
</dbReference>
<dbReference type="FunFam" id="3.30.1010.10:FF:000031">
    <property type="entry name" value="Phosphatidylinositol 4-kinase beta"/>
    <property type="match status" value="1"/>
</dbReference>
<dbReference type="FunFam" id="1.10.1070.11:FF:000004">
    <property type="entry name" value="Phosphatidylinositol 4-kinase, catalytic, beta"/>
    <property type="match status" value="1"/>
</dbReference>
<dbReference type="Gene3D" id="1.10.1070.11">
    <property type="entry name" value="Phosphatidylinositol 3-/4-kinase, catalytic domain"/>
    <property type="match status" value="1"/>
</dbReference>
<dbReference type="Gene3D" id="3.30.1010.10">
    <property type="entry name" value="Phosphatidylinositol 3-kinase Catalytic Subunit, Chain A, domain 4"/>
    <property type="match status" value="1"/>
</dbReference>
<dbReference type="InterPro" id="IPR011009">
    <property type="entry name" value="Kinase-like_dom_sf"/>
</dbReference>
<dbReference type="InterPro" id="IPR000403">
    <property type="entry name" value="PI3/4_kinase_cat_dom"/>
</dbReference>
<dbReference type="InterPro" id="IPR036940">
    <property type="entry name" value="PI3/4_kinase_cat_sf"/>
</dbReference>
<dbReference type="InterPro" id="IPR018936">
    <property type="entry name" value="PI3/4_kinase_CS"/>
</dbReference>
<dbReference type="InterPro" id="IPR001263">
    <property type="entry name" value="PI3K_accessory_dom"/>
</dbReference>
<dbReference type="InterPro" id="IPR049160">
    <property type="entry name" value="PI4KB-PIK1_PIK"/>
</dbReference>
<dbReference type="InterPro" id="IPR015433">
    <property type="entry name" value="PI_Kinase"/>
</dbReference>
<dbReference type="PANTHER" id="PTHR10048:SF22">
    <property type="entry name" value="PHOSPHATIDYLINOSITOL 4-KINASE BETA"/>
    <property type="match status" value="1"/>
</dbReference>
<dbReference type="PANTHER" id="PTHR10048">
    <property type="entry name" value="PHOSPHATIDYLINOSITOL KINASE"/>
    <property type="match status" value="1"/>
</dbReference>
<dbReference type="Pfam" id="PF00454">
    <property type="entry name" value="PI3_PI4_kinase"/>
    <property type="match status" value="1"/>
</dbReference>
<dbReference type="Pfam" id="PF21245">
    <property type="entry name" value="PI4KB-PIK1_PIK"/>
    <property type="match status" value="1"/>
</dbReference>
<dbReference type="SMART" id="SM00146">
    <property type="entry name" value="PI3Kc"/>
    <property type="match status" value="1"/>
</dbReference>
<dbReference type="SUPFAM" id="SSF56112">
    <property type="entry name" value="Protein kinase-like (PK-like)"/>
    <property type="match status" value="1"/>
</dbReference>
<dbReference type="PROSITE" id="PS00915">
    <property type="entry name" value="PI3_4_KINASE_1"/>
    <property type="match status" value="1"/>
</dbReference>
<dbReference type="PROSITE" id="PS00916">
    <property type="entry name" value="PI3_4_KINASE_2"/>
    <property type="match status" value="1"/>
</dbReference>
<dbReference type="PROSITE" id="PS50290">
    <property type="entry name" value="PI3_4_KINASE_3"/>
    <property type="match status" value="1"/>
</dbReference>
<dbReference type="PROSITE" id="PS51545">
    <property type="entry name" value="PIK_HELICAL"/>
    <property type="match status" value="1"/>
</dbReference>
<name>PI4KB_RAT</name>
<sequence>MGDMVVEPATLKPTSEPTPSPSGNNGGSLLSVITEGVGELSVIDPEVAQKACQEVLEKVKLLHGGVAISSKGSPLELVNGDGVDNEIRCLDDPPTEIREEEDEMEPGVVSGTAKGTRRRRQNNSAKQSWLLRLFESKLFDISMAISYLYNSKEPGVQAYIGNRLFCFRNEDVDFYLPQLLNMYIHMDEDVGDAIKPYIVHRCRQSINFSLQCALLLGAYSSDMHISTQRHSRGTKLRKLILSDELKPAHRKRELPTLSPAPDTGLSPSKRTHQRSKSDATASISLSSNLKRTASNPKVENEDEELSSSTESIDNSFSSPVRLAPEREFIKSLMAIGKRLATLPTKEQKTQRLISELSLLNHKLPARVWLPTAGFDHHVVRVPHTQAVVLNSKDKAPYLIYVEVLECENFDTTNVPARIPENRIRSTRSVENLPECGITHEQRAGSFSTVPNYDNDDEAWSVDDIGELQVELPEVHTNSCDNISQFSVDSITSQESKEPVFIAAGDIRRRLSEQLAHTPTAFKRDPEDPSAVALKEPWQEKVRRIREGSPYGHLPNWRLLSVIVKCGDDLRQELLAFQVLKQLQSIWEQERVPLWIKPYKILVISADSGMIEPVVNAVSIHQVKKQSQLSLLDYFLQEHGSYTTEAFLSAQRNFVQSCAGYCLVCYLLQVKDRHNGNILLDAEGHIIHIDFGFILSSSPRNLGFETSAFKLTTEFVDVMGGLNGDMFNYYKMLMLQGLIAARKHMDKVVQIVEIMQQGSQLPCFHGSSTIRNLKERFHMSMTEEQLQLLVEQMVDGSMRSITTKLYDGFQYLTNGIM</sequence>